<feature type="chain" id="PRO_0000391600" description="CASP-like protein 4B2">
    <location>
        <begin position="1"/>
        <end position="206"/>
    </location>
</feature>
<feature type="topological domain" description="Cytoplasmic" evidence="2">
    <location>
        <begin position="1"/>
        <end position="60"/>
    </location>
</feature>
<feature type="transmembrane region" description="Helical" evidence="2">
    <location>
        <begin position="61"/>
        <end position="81"/>
    </location>
</feature>
<feature type="topological domain" description="Extracellular" evidence="2">
    <location>
        <begin position="82"/>
        <end position="99"/>
    </location>
</feature>
<feature type="transmembrane region" description="Helical" evidence="2">
    <location>
        <begin position="100"/>
        <end position="120"/>
    </location>
</feature>
<feature type="topological domain" description="Cytoplasmic" evidence="2">
    <location>
        <begin position="121"/>
        <end position="138"/>
    </location>
</feature>
<feature type="transmembrane region" description="Helical" evidence="2">
    <location>
        <begin position="139"/>
        <end position="159"/>
    </location>
</feature>
<feature type="topological domain" description="Extracellular" evidence="2">
    <location>
        <begin position="160"/>
        <end position="174"/>
    </location>
</feature>
<feature type="transmembrane region" description="Helical" evidence="2">
    <location>
        <begin position="175"/>
        <end position="195"/>
    </location>
</feature>
<feature type="topological domain" description="Cytoplasmic" evidence="2">
    <location>
        <begin position="196"/>
        <end position="206"/>
    </location>
</feature>
<feature type="region of interest" description="Disordered" evidence="3">
    <location>
        <begin position="1"/>
        <end position="42"/>
    </location>
</feature>
<feature type="compositionally biased region" description="Low complexity" evidence="3">
    <location>
        <begin position="1"/>
        <end position="12"/>
    </location>
</feature>
<feature type="compositionally biased region" description="Low complexity" evidence="3">
    <location>
        <begin position="24"/>
        <end position="36"/>
    </location>
</feature>
<gene>
    <name type="ordered locus">Os03g0298300</name>
    <name type="ordered locus">LOC_Os03g18680</name>
</gene>
<comment type="subunit">
    <text evidence="1">Homodimer and heterodimers.</text>
</comment>
<comment type="subcellular location">
    <subcellularLocation>
        <location evidence="1">Cell membrane</location>
        <topology evidence="1">Multi-pass membrane protein</topology>
    </subcellularLocation>
</comment>
<comment type="similarity">
    <text evidence="4">Belongs to the Casparian strip membrane proteins (CASP) family.</text>
</comment>
<keyword id="KW-1003">Cell membrane</keyword>
<keyword id="KW-0472">Membrane</keyword>
<keyword id="KW-1185">Reference proteome</keyword>
<keyword id="KW-0812">Transmembrane</keyword>
<keyword id="KW-1133">Transmembrane helix</keyword>
<dbReference type="EMBL" id="DP000009">
    <property type="protein sequence ID" value="ABF95460.1"/>
    <property type="molecule type" value="Genomic_DNA"/>
</dbReference>
<dbReference type="EMBL" id="AP008209">
    <property type="protein sequence ID" value="BAF11756.1"/>
    <property type="molecule type" value="Genomic_DNA"/>
</dbReference>
<dbReference type="EMBL" id="AP014959">
    <property type="protein sequence ID" value="BAS83741.1"/>
    <property type="molecule type" value="Genomic_DNA"/>
</dbReference>
<dbReference type="EMBL" id="AK061180">
    <property type="protein sequence ID" value="BAG87777.1"/>
    <property type="molecule type" value="mRNA"/>
</dbReference>
<dbReference type="EMBL" id="AK099089">
    <property type="protein sequence ID" value="BAG93916.1"/>
    <property type="molecule type" value="mRNA"/>
</dbReference>
<dbReference type="RefSeq" id="XP_015628293.1">
    <property type="nucleotide sequence ID" value="XM_015772807.1"/>
</dbReference>
<dbReference type="SMR" id="Q10MR5"/>
<dbReference type="FunCoup" id="Q10MR5">
    <property type="interactions" value="3"/>
</dbReference>
<dbReference type="PaxDb" id="39947-Q10MR5"/>
<dbReference type="EnsemblPlants" id="Os03t0298300-01">
    <property type="protein sequence ID" value="Os03t0298300-01"/>
    <property type="gene ID" value="Os03g0298300"/>
</dbReference>
<dbReference type="EnsemblPlants" id="Os03t0298300-02">
    <property type="protein sequence ID" value="Os03t0298300-02"/>
    <property type="gene ID" value="Os03g0298300"/>
</dbReference>
<dbReference type="Gramene" id="Os03t0298300-01">
    <property type="protein sequence ID" value="Os03t0298300-01"/>
    <property type="gene ID" value="Os03g0298300"/>
</dbReference>
<dbReference type="Gramene" id="Os03t0298300-02">
    <property type="protein sequence ID" value="Os03t0298300-02"/>
    <property type="gene ID" value="Os03g0298300"/>
</dbReference>
<dbReference type="KEGG" id="dosa:Os03g0298300"/>
<dbReference type="eggNOG" id="ENOG502RYC3">
    <property type="taxonomic scope" value="Eukaryota"/>
</dbReference>
<dbReference type="HOGENOM" id="CLU_048961_4_1_1"/>
<dbReference type="InParanoid" id="Q10MR5"/>
<dbReference type="OMA" id="EYKCATR"/>
<dbReference type="OrthoDB" id="1924823at2759"/>
<dbReference type="Proteomes" id="UP000000763">
    <property type="component" value="Chromosome 3"/>
</dbReference>
<dbReference type="Proteomes" id="UP000059680">
    <property type="component" value="Chromosome 3"/>
</dbReference>
<dbReference type="GO" id="GO:0005886">
    <property type="term" value="C:plasma membrane"/>
    <property type="evidence" value="ECO:0007669"/>
    <property type="project" value="UniProtKB-SubCell"/>
</dbReference>
<dbReference type="InterPro" id="IPR006702">
    <property type="entry name" value="CASP_dom"/>
</dbReference>
<dbReference type="PANTHER" id="PTHR33573">
    <property type="entry name" value="CASP-LIKE PROTEIN 4A4"/>
    <property type="match status" value="1"/>
</dbReference>
<dbReference type="PANTHER" id="PTHR33573:SF54">
    <property type="entry name" value="CASP-LIKE PROTEIN 4B2"/>
    <property type="match status" value="1"/>
</dbReference>
<dbReference type="Pfam" id="PF04535">
    <property type="entry name" value="CASP_dom"/>
    <property type="match status" value="1"/>
</dbReference>
<protein>
    <recommendedName>
        <fullName>CASP-like protein 4B2</fullName>
        <shortName>OsCASPL4B2</shortName>
    </recommendedName>
</protein>
<reference key="1">
    <citation type="journal article" date="2005" name="Genome Res.">
        <title>Sequence, annotation, and analysis of synteny between rice chromosome 3 and diverged grass species.</title>
        <authorList>
            <consortium name="The rice chromosome 3 sequencing consortium"/>
            <person name="Buell C.R."/>
            <person name="Yuan Q."/>
            <person name="Ouyang S."/>
            <person name="Liu J."/>
            <person name="Zhu W."/>
            <person name="Wang A."/>
            <person name="Maiti R."/>
            <person name="Haas B."/>
            <person name="Wortman J."/>
            <person name="Pertea M."/>
            <person name="Jones K.M."/>
            <person name="Kim M."/>
            <person name="Overton L."/>
            <person name="Tsitrin T."/>
            <person name="Fadrosh D."/>
            <person name="Bera J."/>
            <person name="Weaver B."/>
            <person name="Jin S."/>
            <person name="Johri S."/>
            <person name="Reardon M."/>
            <person name="Webb K."/>
            <person name="Hill J."/>
            <person name="Moffat K."/>
            <person name="Tallon L."/>
            <person name="Van Aken S."/>
            <person name="Lewis M."/>
            <person name="Utterback T."/>
            <person name="Feldblyum T."/>
            <person name="Zismann V."/>
            <person name="Iobst S."/>
            <person name="Hsiao J."/>
            <person name="de Vazeille A.R."/>
            <person name="Salzberg S.L."/>
            <person name="White O."/>
            <person name="Fraser C.M."/>
            <person name="Yu Y."/>
            <person name="Kim H."/>
            <person name="Rambo T."/>
            <person name="Currie J."/>
            <person name="Collura K."/>
            <person name="Kernodle-Thompson S."/>
            <person name="Wei F."/>
            <person name="Kudrna K."/>
            <person name="Ammiraju J.S.S."/>
            <person name="Luo M."/>
            <person name="Goicoechea J.L."/>
            <person name="Wing R.A."/>
            <person name="Henry D."/>
            <person name="Oates R."/>
            <person name="Palmer M."/>
            <person name="Pries G."/>
            <person name="Saski C."/>
            <person name="Simmons J."/>
            <person name="Soderlund C."/>
            <person name="Nelson W."/>
            <person name="de la Bastide M."/>
            <person name="Spiegel L."/>
            <person name="Nascimento L."/>
            <person name="Huang E."/>
            <person name="Preston R."/>
            <person name="Zutavern T."/>
            <person name="Palmer L."/>
            <person name="O'Shaughnessy A."/>
            <person name="Dike S."/>
            <person name="McCombie W.R."/>
            <person name="Minx P."/>
            <person name="Cordum H."/>
            <person name="Wilson R."/>
            <person name="Jin W."/>
            <person name="Lee H.R."/>
            <person name="Jiang J."/>
            <person name="Jackson S."/>
        </authorList>
    </citation>
    <scope>NUCLEOTIDE SEQUENCE [LARGE SCALE GENOMIC DNA]</scope>
    <source>
        <strain>cv. Nipponbare</strain>
    </source>
</reference>
<reference key="2">
    <citation type="journal article" date="2005" name="Nature">
        <title>The map-based sequence of the rice genome.</title>
        <authorList>
            <consortium name="International rice genome sequencing project (IRGSP)"/>
        </authorList>
    </citation>
    <scope>NUCLEOTIDE SEQUENCE [LARGE SCALE GENOMIC DNA]</scope>
    <source>
        <strain>cv. Nipponbare</strain>
    </source>
</reference>
<reference key="3">
    <citation type="journal article" date="2008" name="Nucleic Acids Res.">
        <title>The rice annotation project database (RAP-DB): 2008 update.</title>
        <authorList>
            <consortium name="The rice annotation project (RAP)"/>
        </authorList>
    </citation>
    <scope>GENOME REANNOTATION</scope>
    <source>
        <strain>cv. Nipponbare</strain>
    </source>
</reference>
<reference key="4">
    <citation type="journal article" date="2013" name="Rice">
        <title>Improvement of the Oryza sativa Nipponbare reference genome using next generation sequence and optical map data.</title>
        <authorList>
            <person name="Kawahara Y."/>
            <person name="de la Bastide M."/>
            <person name="Hamilton J.P."/>
            <person name="Kanamori H."/>
            <person name="McCombie W.R."/>
            <person name="Ouyang S."/>
            <person name="Schwartz D.C."/>
            <person name="Tanaka T."/>
            <person name="Wu J."/>
            <person name="Zhou S."/>
            <person name="Childs K.L."/>
            <person name="Davidson R.M."/>
            <person name="Lin H."/>
            <person name="Quesada-Ocampo L."/>
            <person name="Vaillancourt B."/>
            <person name="Sakai H."/>
            <person name="Lee S.S."/>
            <person name="Kim J."/>
            <person name="Numa H."/>
            <person name="Itoh T."/>
            <person name="Buell C.R."/>
            <person name="Matsumoto T."/>
        </authorList>
    </citation>
    <scope>GENOME REANNOTATION</scope>
    <source>
        <strain>cv. Nipponbare</strain>
    </source>
</reference>
<reference key="5">
    <citation type="journal article" date="2003" name="Science">
        <title>Collection, mapping, and annotation of over 28,000 cDNA clones from japonica rice.</title>
        <authorList>
            <consortium name="The rice full-length cDNA consortium"/>
        </authorList>
    </citation>
    <scope>NUCLEOTIDE SEQUENCE [LARGE SCALE MRNA]</scope>
    <source>
        <strain>cv. Nipponbare</strain>
    </source>
</reference>
<reference key="6">
    <citation type="journal article" date="2014" name="Plant Physiol.">
        <title>Functional and evolutionary analysis of the CASPARIAN STRIP MEMBRANE DOMAIN PROTEIN family.</title>
        <authorList>
            <person name="Roppolo D."/>
            <person name="Boeckmann B."/>
            <person name="Pfister A."/>
            <person name="Boutet E."/>
            <person name="Rubio M.C."/>
            <person name="Denervaud-Tendon V."/>
            <person name="Vermeer J.E."/>
            <person name="Gheyselinck J."/>
            <person name="Xenarios I."/>
            <person name="Geldner N."/>
        </authorList>
    </citation>
    <scope>GENE FAMILY</scope>
    <scope>NOMENCLATURE</scope>
</reference>
<proteinExistence type="evidence at transcript level"/>
<organism>
    <name type="scientific">Oryza sativa subsp. japonica</name>
    <name type="common">Rice</name>
    <dbReference type="NCBI Taxonomy" id="39947"/>
    <lineage>
        <taxon>Eukaryota</taxon>
        <taxon>Viridiplantae</taxon>
        <taxon>Streptophyta</taxon>
        <taxon>Embryophyta</taxon>
        <taxon>Tracheophyta</taxon>
        <taxon>Spermatophyta</taxon>
        <taxon>Magnoliopsida</taxon>
        <taxon>Liliopsida</taxon>
        <taxon>Poales</taxon>
        <taxon>Poaceae</taxon>
        <taxon>BOP clade</taxon>
        <taxon>Oryzoideae</taxon>
        <taxon>Oryzeae</taxon>
        <taxon>Oryzinae</taxon>
        <taxon>Oryza</taxon>
        <taxon>Oryza sativa</taxon>
    </lineage>
</organism>
<accession>Q10MR5</accession>
<accession>A0A0P0VX75</accession>
<sequence length="206" mass="21818">MAMVPADADAAAKPPPDVEKPDYSSQNGAPNSAAAAAGGGGGGVVDSVVARWRREDMLDKSPLALHAAAAAFAFVALVLVASNQHGDWMEFDRYQEYRYLLAIAALAFAYSLAQALRHALRMRRGVDPVPTASGRLLDFASDQVVAYLLMSALSAATPITNRMRSAVINRFTDTTAAAISMAFLAFVSLALSAIVSGYKLSKQTYM</sequence>
<evidence type="ECO:0000250" key="1"/>
<evidence type="ECO:0000255" key="2"/>
<evidence type="ECO:0000256" key="3">
    <source>
        <dbReference type="SAM" id="MobiDB-lite"/>
    </source>
</evidence>
<evidence type="ECO:0000305" key="4"/>
<name>CSPLN_ORYSJ</name>